<sequence>MFNFIDNVQTYSKEALQAAKYIGQGFMVTFDHMNRRAITIQYPYEKLIPSERFRGRIHFEFDKCIACEVCVRVCPINLPVVNWEFQKEKKKKQLQTYSIDFGVCIFCGNCVEYCPTNCLSMTEEYELSVYDRHELNYDNFALGRLPTMVNNDSMVKGIKGLGYLPKGIIEGHIDNQ</sequence>
<protein>
    <recommendedName>
        <fullName evidence="1">NAD(P)H-quinone oxidoreductase subunit I, chloroplastic</fullName>
        <ecNumber evidence="1">7.1.1.-</ecNumber>
    </recommendedName>
    <alternativeName>
        <fullName evidence="1">NAD(P)H dehydrogenase subunit I</fullName>
        <shortName evidence="1">NDH subunit I</shortName>
    </alternativeName>
    <alternativeName>
        <fullName evidence="1">NADH-plastoquinone oxidoreductase subunit I</fullName>
    </alternativeName>
</protein>
<organism>
    <name type="scientific">Mesostigma viride</name>
    <name type="common">Green alga</name>
    <dbReference type="NCBI Taxonomy" id="41882"/>
    <lineage>
        <taxon>Eukaryota</taxon>
        <taxon>Viridiplantae</taxon>
        <taxon>Streptophyta</taxon>
        <taxon>Mesostigmatophyceae</taxon>
        <taxon>Mesostigmatales</taxon>
        <taxon>Mesostigmataceae</taxon>
        <taxon>Mesostigma</taxon>
    </lineage>
</organism>
<dbReference type="EC" id="7.1.1.-" evidence="1"/>
<dbReference type="EMBL" id="AF166114">
    <property type="protein sequence ID" value="AAF43886.1"/>
    <property type="molecule type" value="Genomic_DNA"/>
</dbReference>
<dbReference type="RefSeq" id="NP_038448.1">
    <property type="nucleotide sequence ID" value="NC_002186.1"/>
</dbReference>
<dbReference type="SMR" id="Q9MUL2"/>
<dbReference type="GeneID" id="800973"/>
<dbReference type="GO" id="GO:0009535">
    <property type="term" value="C:chloroplast thylakoid membrane"/>
    <property type="evidence" value="ECO:0007669"/>
    <property type="project" value="UniProtKB-SubCell"/>
</dbReference>
<dbReference type="GO" id="GO:0051539">
    <property type="term" value="F:4 iron, 4 sulfur cluster binding"/>
    <property type="evidence" value="ECO:0007669"/>
    <property type="project" value="UniProtKB-KW"/>
</dbReference>
<dbReference type="GO" id="GO:0005506">
    <property type="term" value="F:iron ion binding"/>
    <property type="evidence" value="ECO:0007669"/>
    <property type="project" value="UniProtKB-UniRule"/>
</dbReference>
<dbReference type="GO" id="GO:0008137">
    <property type="term" value="F:NADH dehydrogenase (ubiquinone) activity"/>
    <property type="evidence" value="ECO:0007669"/>
    <property type="project" value="InterPro"/>
</dbReference>
<dbReference type="GO" id="GO:0048038">
    <property type="term" value="F:quinone binding"/>
    <property type="evidence" value="ECO:0007669"/>
    <property type="project" value="UniProtKB-KW"/>
</dbReference>
<dbReference type="GO" id="GO:0019684">
    <property type="term" value="P:photosynthesis, light reaction"/>
    <property type="evidence" value="ECO:0007669"/>
    <property type="project" value="UniProtKB-UniRule"/>
</dbReference>
<dbReference type="Gene3D" id="3.30.70.3270">
    <property type="match status" value="1"/>
</dbReference>
<dbReference type="HAMAP" id="MF_01351">
    <property type="entry name" value="NDH1_NuoI"/>
    <property type="match status" value="1"/>
</dbReference>
<dbReference type="InterPro" id="IPR017896">
    <property type="entry name" value="4Fe4S_Fe-S-bd"/>
</dbReference>
<dbReference type="InterPro" id="IPR017900">
    <property type="entry name" value="4Fe4S_Fe_S_CS"/>
</dbReference>
<dbReference type="InterPro" id="IPR010226">
    <property type="entry name" value="NADH_quinone_OxRdtase_chainI"/>
</dbReference>
<dbReference type="InterPro" id="IPR004497">
    <property type="entry name" value="NDHI"/>
</dbReference>
<dbReference type="NCBIfam" id="TIGR00403">
    <property type="entry name" value="ndhI"/>
    <property type="match status" value="1"/>
</dbReference>
<dbReference type="NCBIfam" id="TIGR01971">
    <property type="entry name" value="NuoI"/>
    <property type="match status" value="1"/>
</dbReference>
<dbReference type="NCBIfam" id="NF004537">
    <property type="entry name" value="PRK05888.1-3"/>
    <property type="match status" value="1"/>
</dbReference>
<dbReference type="PANTHER" id="PTHR47275">
    <property type="entry name" value="NAD(P)H-QUINONE OXIDOREDUCTASE SUBUNIT I, CHLOROPLASTIC"/>
    <property type="match status" value="1"/>
</dbReference>
<dbReference type="PANTHER" id="PTHR47275:SF1">
    <property type="entry name" value="NAD(P)H-QUINONE OXIDOREDUCTASE SUBUNIT I, CHLOROPLASTIC"/>
    <property type="match status" value="1"/>
</dbReference>
<dbReference type="Pfam" id="PF12838">
    <property type="entry name" value="Fer4_7"/>
    <property type="match status" value="1"/>
</dbReference>
<dbReference type="SUPFAM" id="SSF54862">
    <property type="entry name" value="4Fe-4S ferredoxins"/>
    <property type="match status" value="1"/>
</dbReference>
<dbReference type="PROSITE" id="PS00198">
    <property type="entry name" value="4FE4S_FER_1"/>
    <property type="match status" value="2"/>
</dbReference>
<dbReference type="PROSITE" id="PS51379">
    <property type="entry name" value="4FE4S_FER_2"/>
    <property type="match status" value="2"/>
</dbReference>
<reference key="1">
    <citation type="journal article" date="2000" name="Nature">
        <title>Ancestral chloroplast genome in Mesostigma viride reveals an early branch of green plant evolution.</title>
        <authorList>
            <person name="Lemieux C."/>
            <person name="Otis C."/>
            <person name="Turmel M."/>
        </authorList>
    </citation>
    <scope>NUCLEOTIDE SEQUENCE [LARGE SCALE GENOMIC DNA]</scope>
    <source>
        <strain>NIES-296 / KY-14 / CCMP 2046</strain>
    </source>
</reference>
<proteinExistence type="inferred from homology"/>
<comment type="function">
    <text evidence="1">NDH shuttles electrons from NAD(P)H:plastoquinone, via FMN and iron-sulfur (Fe-S) centers, to quinones in the photosynthetic chain and possibly in a chloroplast respiratory chain. The immediate electron acceptor for the enzyme in this species is believed to be plastoquinone. Couples the redox reaction to proton translocation, and thus conserves the redox energy in a proton gradient.</text>
</comment>
<comment type="catalytic activity">
    <reaction evidence="1">
        <text>a plastoquinone + NADH + (n+1) H(+)(in) = a plastoquinol + NAD(+) + n H(+)(out)</text>
        <dbReference type="Rhea" id="RHEA:42608"/>
        <dbReference type="Rhea" id="RHEA-COMP:9561"/>
        <dbReference type="Rhea" id="RHEA-COMP:9562"/>
        <dbReference type="ChEBI" id="CHEBI:15378"/>
        <dbReference type="ChEBI" id="CHEBI:17757"/>
        <dbReference type="ChEBI" id="CHEBI:57540"/>
        <dbReference type="ChEBI" id="CHEBI:57945"/>
        <dbReference type="ChEBI" id="CHEBI:62192"/>
    </reaction>
</comment>
<comment type="catalytic activity">
    <reaction evidence="1">
        <text>a plastoquinone + NADPH + (n+1) H(+)(in) = a plastoquinol + NADP(+) + n H(+)(out)</text>
        <dbReference type="Rhea" id="RHEA:42612"/>
        <dbReference type="Rhea" id="RHEA-COMP:9561"/>
        <dbReference type="Rhea" id="RHEA-COMP:9562"/>
        <dbReference type="ChEBI" id="CHEBI:15378"/>
        <dbReference type="ChEBI" id="CHEBI:17757"/>
        <dbReference type="ChEBI" id="CHEBI:57783"/>
        <dbReference type="ChEBI" id="CHEBI:58349"/>
        <dbReference type="ChEBI" id="CHEBI:62192"/>
    </reaction>
</comment>
<comment type="cofactor">
    <cofactor evidence="1">
        <name>[4Fe-4S] cluster</name>
        <dbReference type="ChEBI" id="CHEBI:49883"/>
    </cofactor>
    <text evidence="1">Binds 2 [4Fe-4S] clusters per subunit.</text>
</comment>
<comment type="subunit">
    <text evidence="1">NDH is composed of at least 16 different subunits, 5 of which are encoded in the nucleus.</text>
</comment>
<comment type="subcellular location">
    <subcellularLocation>
        <location evidence="1">Plastid</location>
        <location evidence="1">Chloroplast thylakoid membrane</location>
        <topology evidence="1">Peripheral membrane protein</topology>
    </subcellularLocation>
</comment>
<comment type="similarity">
    <text evidence="1">Belongs to the complex I 23 kDa subunit family.</text>
</comment>
<gene>
    <name evidence="1" type="primary">ndhI</name>
</gene>
<evidence type="ECO:0000255" key="1">
    <source>
        <dbReference type="HAMAP-Rule" id="MF_01351"/>
    </source>
</evidence>
<keyword id="KW-0004">4Fe-4S</keyword>
<keyword id="KW-0150">Chloroplast</keyword>
<keyword id="KW-0408">Iron</keyword>
<keyword id="KW-0411">Iron-sulfur</keyword>
<keyword id="KW-0472">Membrane</keyword>
<keyword id="KW-0479">Metal-binding</keyword>
<keyword id="KW-0520">NAD</keyword>
<keyword id="KW-0521">NADP</keyword>
<keyword id="KW-0934">Plastid</keyword>
<keyword id="KW-0618">Plastoquinone</keyword>
<keyword id="KW-0874">Quinone</keyword>
<keyword id="KW-0677">Repeat</keyword>
<keyword id="KW-0793">Thylakoid</keyword>
<keyword id="KW-1278">Translocase</keyword>
<feature type="chain" id="PRO_0000118708" description="NAD(P)H-quinone oxidoreductase subunit I, chloroplastic">
    <location>
        <begin position="1"/>
        <end position="176"/>
    </location>
</feature>
<feature type="domain" description="4Fe-4S ferredoxin-type 1" evidence="1">
    <location>
        <begin position="55"/>
        <end position="84"/>
    </location>
</feature>
<feature type="domain" description="4Fe-4S ferredoxin-type 2" evidence="1">
    <location>
        <begin position="95"/>
        <end position="124"/>
    </location>
</feature>
<feature type="binding site" evidence="1">
    <location>
        <position position="64"/>
    </location>
    <ligand>
        <name>[4Fe-4S] cluster</name>
        <dbReference type="ChEBI" id="CHEBI:49883"/>
        <label>1</label>
    </ligand>
</feature>
<feature type="binding site" evidence="1">
    <location>
        <position position="67"/>
    </location>
    <ligand>
        <name>[4Fe-4S] cluster</name>
        <dbReference type="ChEBI" id="CHEBI:49883"/>
        <label>1</label>
    </ligand>
</feature>
<feature type="binding site" evidence="1">
    <location>
        <position position="70"/>
    </location>
    <ligand>
        <name>[4Fe-4S] cluster</name>
        <dbReference type="ChEBI" id="CHEBI:49883"/>
        <label>1</label>
    </ligand>
</feature>
<feature type="binding site" evidence="1">
    <location>
        <position position="74"/>
    </location>
    <ligand>
        <name>[4Fe-4S] cluster</name>
        <dbReference type="ChEBI" id="CHEBI:49883"/>
        <label>2</label>
    </ligand>
</feature>
<feature type="binding site" evidence="1">
    <location>
        <position position="104"/>
    </location>
    <ligand>
        <name>[4Fe-4S] cluster</name>
        <dbReference type="ChEBI" id="CHEBI:49883"/>
        <label>2</label>
    </ligand>
</feature>
<feature type="binding site" evidence="1">
    <location>
        <position position="107"/>
    </location>
    <ligand>
        <name>[4Fe-4S] cluster</name>
        <dbReference type="ChEBI" id="CHEBI:49883"/>
        <label>2</label>
    </ligand>
</feature>
<feature type="binding site" evidence="1">
    <location>
        <position position="110"/>
    </location>
    <ligand>
        <name>[4Fe-4S] cluster</name>
        <dbReference type="ChEBI" id="CHEBI:49883"/>
        <label>2</label>
    </ligand>
</feature>
<feature type="binding site" evidence="1">
    <location>
        <position position="114"/>
    </location>
    <ligand>
        <name>[4Fe-4S] cluster</name>
        <dbReference type="ChEBI" id="CHEBI:49883"/>
        <label>1</label>
    </ligand>
</feature>
<accession>Q9MUL2</accession>
<name>NDHI_MESVI</name>
<geneLocation type="chloroplast"/>